<sequence>MTAPAELSPTLQLACDLIRRPSVTPVDADCQAQMMKRLGAVGFQLEPMRIEDVDNFWATHGNQDGPVLCFAGHTDVVPTGPVQQWQHEPFEALIDADGMLCGRGAADMKGSLASMVVASERFVQDYPNHRGRVAFLITSDEEGPAHHGTKAVVERLIARNERLDWCIVGEPSSTTLLGDVVKNGRRGSLGAKLTVRGKQGHVAYPHLARNPIHLAAPALAELAAEHWDEGNAFFPPTSFQISNLNSGTGATNVVPGDLIAVFNFRFSTESTVEGLQARVSAILDKHELDWSIDWALSGLPFLTEPGELLDAVSASIKGVTGRDTQPSTSGGTSDGRFIATMGTQVVELGPVNATIHQVDERILASDLDLLTEIYYQTLVRLLA</sequence>
<comment type="function">
    <text evidence="1">Catalyzes the hydrolysis of N-succinyl-L,L-diaminopimelic acid (SDAP), forming succinate and LL-2,6-diaminopimelate (DAP), an intermediate involved in the bacterial biosynthesis of lysine and meso-diaminopimelic acid, an essential component of bacterial cell walls.</text>
</comment>
<comment type="catalytic activity">
    <reaction evidence="1">
        <text>N-succinyl-(2S,6S)-2,6-diaminopimelate + H2O = (2S,6S)-2,6-diaminopimelate + succinate</text>
        <dbReference type="Rhea" id="RHEA:22608"/>
        <dbReference type="ChEBI" id="CHEBI:15377"/>
        <dbReference type="ChEBI" id="CHEBI:30031"/>
        <dbReference type="ChEBI" id="CHEBI:57609"/>
        <dbReference type="ChEBI" id="CHEBI:58087"/>
        <dbReference type="EC" id="3.5.1.18"/>
    </reaction>
</comment>
<comment type="cofactor">
    <cofactor evidence="1">
        <name>Zn(2+)</name>
        <dbReference type="ChEBI" id="CHEBI:29105"/>
    </cofactor>
    <cofactor evidence="1">
        <name>Co(2+)</name>
        <dbReference type="ChEBI" id="CHEBI:48828"/>
    </cofactor>
    <text evidence="1">Binds 2 Zn(2+) or Co(2+) ions per subunit.</text>
</comment>
<comment type="pathway">
    <text evidence="1">Amino-acid biosynthesis; L-lysine biosynthesis via DAP pathway; LL-2,6-diaminopimelate from (S)-tetrahydrodipicolinate (succinylase route): step 3/3.</text>
</comment>
<comment type="subunit">
    <text evidence="1">Homodimer.</text>
</comment>
<comment type="similarity">
    <text evidence="1">Belongs to the peptidase M20A family. DapE subfamily.</text>
</comment>
<feature type="chain" id="PRO_0000375664" description="Succinyl-diaminopimelate desuccinylase">
    <location>
        <begin position="1"/>
        <end position="383"/>
    </location>
</feature>
<feature type="active site" evidence="1">
    <location>
        <position position="75"/>
    </location>
</feature>
<feature type="active site" description="Proton acceptor" evidence="1">
    <location>
        <position position="141"/>
    </location>
</feature>
<feature type="binding site" evidence="1">
    <location>
        <position position="73"/>
    </location>
    <ligand>
        <name>Zn(2+)</name>
        <dbReference type="ChEBI" id="CHEBI:29105"/>
        <label>1</label>
    </ligand>
</feature>
<feature type="binding site" evidence="1">
    <location>
        <position position="107"/>
    </location>
    <ligand>
        <name>Zn(2+)</name>
        <dbReference type="ChEBI" id="CHEBI:29105"/>
        <label>1</label>
    </ligand>
</feature>
<feature type="binding site" evidence="1">
    <location>
        <position position="107"/>
    </location>
    <ligand>
        <name>Zn(2+)</name>
        <dbReference type="ChEBI" id="CHEBI:29105"/>
        <label>2</label>
    </ligand>
</feature>
<feature type="binding site" evidence="1">
    <location>
        <position position="142"/>
    </location>
    <ligand>
        <name>Zn(2+)</name>
        <dbReference type="ChEBI" id="CHEBI:29105"/>
        <label>2</label>
    </ligand>
</feature>
<feature type="binding site" evidence="1">
    <location>
        <position position="170"/>
    </location>
    <ligand>
        <name>Zn(2+)</name>
        <dbReference type="ChEBI" id="CHEBI:29105"/>
        <label>1</label>
    </ligand>
</feature>
<feature type="binding site" evidence="1">
    <location>
        <position position="356"/>
    </location>
    <ligand>
        <name>Zn(2+)</name>
        <dbReference type="ChEBI" id="CHEBI:29105"/>
        <label>2</label>
    </ligand>
</feature>
<organism>
    <name type="scientific">Pseudomonas putida (strain W619)</name>
    <dbReference type="NCBI Taxonomy" id="390235"/>
    <lineage>
        <taxon>Bacteria</taxon>
        <taxon>Pseudomonadati</taxon>
        <taxon>Pseudomonadota</taxon>
        <taxon>Gammaproteobacteria</taxon>
        <taxon>Pseudomonadales</taxon>
        <taxon>Pseudomonadaceae</taxon>
        <taxon>Pseudomonas</taxon>
    </lineage>
</organism>
<proteinExistence type="inferred from homology"/>
<dbReference type="EC" id="3.5.1.18" evidence="1"/>
<dbReference type="EMBL" id="CP000949">
    <property type="protein sequence ID" value="ACA74574.1"/>
    <property type="molecule type" value="Genomic_DNA"/>
</dbReference>
<dbReference type="SMR" id="B1JBS2"/>
<dbReference type="STRING" id="390235.PputW619_4094"/>
<dbReference type="KEGG" id="ppw:PputW619_4094"/>
<dbReference type="eggNOG" id="COG0624">
    <property type="taxonomic scope" value="Bacteria"/>
</dbReference>
<dbReference type="HOGENOM" id="CLU_021802_4_0_6"/>
<dbReference type="OrthoDB" id="9809784at2"/>
<dbReference type="UniPathway" id="UPA00034">
    <property type="reaction ID" value="UER00021"/>
</dbReference>
<dbReference type="GO" id="GO:0008777">
    <property type="term" value="F:acetylornithine deacetylase activity"/>
    <property type="evidence" value="ECO:0007669"/>
    <property type="project" value="TreeGrafter"/>
</dbReference>
<dbReference type="GO" id="GO:0050897">
    <property type="term" value="F:cobalt ion binding"/>
    <property type="evidence" value="ECO:0007669"/>
    <property type="project" value="UniProtKB-UniRule"/>
</dbReference>
<dbReference type="GO" id="GO:0009014">
    <property type="term" value="F:succinyl-diaminopimelate desuccinylase activity"/>
    <property type="evidence" value="ECO:0007669"/>
    <property type="project" value="UniProtKB-UniRule"/>
</dbReference>
<dbReference type="GO" id="GO:0008270">
    <property type="term" value="F:zinc ion binding"/>
    <property type="evidence" value="ECO:0007669"/>
    <property type="project" value="UniProtKB-UniRule"/>
</dbReference>
<dbReference type="GO" id="GO:0019877">
    <property type="term" value="P:diaminopimelate biosynthetic process"/>
    <property type="evidence" value="ECO:0007669"/>
    <property type="project" value="UniProtKB-UniRule"/>
</dbReference>
<dbReference type="GO" id="GO:0006526">
    <property type="term" value="P:L-arginine biosynthetic process"/>
    <property type="evidence" value="ECO:0007669"/>
    <property type="project" value="TreeGrafter"/>
</dbReference>
<dbReference type="GO" id="GO:0009089">
    <property type="term" value="P:lysine biosynthetic process via diaminopimelate"/>
    <property type="evidence" value="ECO:0007669"/>
    <property type="project" value="UniProtKB-UniRule"/>
</dbReference>
<dbReference type="CDD" id="cd03891">
    <property type="entry name" value="M20_DapE_proteobac"/>
    <property type="match status" value="1"/>
</dbReference>
<dbReference type="FunFam" id="3.30.70.360:FF:000011">
    <property type="entry name" value="Succinyl-diaminopimelate desuccinylase"/>
    <property type="match status" value="1"/>
</dbReference>
<dbReference type="FunFam" id="3.40.630.10:FF:000005">
    <property type="entry name" value="Succinyl-diaminopimelate desuccinylase"/>
    <property type="match status" value="1"/>
</dbReference>
<dbReference type="Gene3D" id="1.10.150.900">
    <property type="match status" value="1"/>
</dbReference>
<dbReference type="Gene3D" id="3.30.70.360">
    <property type="match status" value="1"/>
</dbReference>
<dbReference type="Gene3D" id="3.40.630.10">
    <property type="entry name" value="Zn peptidases"/>
    <property type="match status" value="1"/>
</dbReference>
<dbReference type="HAMAP" id="MF_01690">
    <property type="entry name" value="DapE"/>
    <property type="match status" value="1"/>
</dbReference>
<dbReference type="InterPro" id="IPR001261">
    <property type="entry name" value="ArgE/DapE_CS"/>
</dbReference>
<dbReference type="InterPro" id="IPR036264">
    <property type="entry name" value="Bact_exopeptidase_dim_dom"/>
</dbReference>
<dbReference type="InterPro" id="IPR005941">
    <property type="entry name" value="DapE_proteobac"/>
</dbReference>
<dbReference type="InterPro" id="IPR002933">
    <property type="entry name" value="Peptidase_M20"/>
</dbReference>
<dbReference type="InterPro" id="IPR011650">
    <property type="entry name" value="Peptidase_M20_dimer"/>
</dbReference>
<dbReference type="InterPro" id="IPR050072">
    <property type="entry name" value="Peptidase_M20A"/>
</dbReference>
<dbReference type="NCBIfam" id="TIGR01246">
    <property type="entry name" value="dapE_proteo"/>
    <property type="match status" value="1"/>
</dbReference>
<dbReference type="NCBIfam" id="NF009557">
    <property type="entry name" value="PRK13009.1"/>
    <property type="match status" value="1"/>
</dbReference>
<dbReference type="PANTHER" id="PTHR43808">
    <property type="entry name" value="ACETYLORNITHINE DEACETYLASE"/>
    <property type="match status" value="1"/>
</dbReference>
<dbReference type="PANTHER" id="PTHR43808:SF31">
    <property type="entry name" value="N-ACETYL-L-CITRULLINE DEACETYLASE"/>
    <property type="match status" value="1"/>
</dbReference>
<dbReference type="Pfam" id="PF07687">
    <property type="entry name" value="M20_dimer"/>
    <property type="match status" value="1"/>
</dbReference>
<dbReference type="Pfam" id="PF01546">
    <property type="entry name" value="Peptidase_M20"/>
    <property type="match status" value="1"/>
</dbReference>
<dbReference type="SUPFAM" id="SSF55031">
    <property type="entry name" value="Bacterial exopeptidase dimerisation domain"/>
    <property type="match status" value="1"/>
</dbReference>
<dbReference type="SUPFAM" id="SSF53187">
    <property type="entry name" value="Zn-dependent exopeptidases"/>
    <property type="match status" value="1"/>
</dbReference>
<dbReference type="PROSITE" id="PS00759">
    <property type="entry name" value="ARGE_DAPE_CPG2_2"/>
    <property type="match status" value="1"/>
</dbReference>
<reference key="1">
    <citation type="submission" date="2008-02" db="EMBL/GenBank/DDBJ databases">
        <title>Complete sequence of Pseudomonas putida W619.</title>
        <authorList>
            <person name="Copeland A."/>
            <person name="Lucas S."/>
            <person name="Lapidus A."/>
            <person name="Barry K."/>
            <person name="Detter J.C."/>
            <person name="Glavina del Rio T."/>
            <person name="Dalin E."/>
            <person name="Tice H."/>
            <person name="Pitluck S."/>
            <person name="Chain P."/>
            <person name="Malfatti S."/>
            <person name="Shin M."/>
            <person name="Vergez L."/>
            <person name="Schmutz J."/>
            <person name="Larimer F."/>
            <person name="Land M."/>
            <person name="Hauser L."/>
            <person name="Kyrpides N."/>
            <person name="Kim E."/>
            <person name="Taghavi S."/>
            <person name="Vangronsveld D."/>
            <person name="van der Lelie D."/>
            <person name="Richardson P."/>
        </authorList>
    </citation>
    <scope>NUCLEOTIDE SEQUENCE [LARGE SCALE GENOMIC DNA]</scope>
    <source>
        <strain>W619</strain>
    </source>
</reference>
<gene>
    <name evidence="1" type="primary">dapE</name>
    <name type="ordered locus">PputW619_4094</name>
</gene>
<name>DAPE_PSEPW</name>
<accession>B1JBS2</accession>
<evidence type="ECO:0000255" key="1">
    <source>
        <dbReference type="HAMAP-Rule" id="MF_01690"/>
    </source>
</evidence>
<keyword id="KW-0028">Amino-acid biosynthesis</keyword>
<keyword id="KW-0170">Cobalt</keyword>
<keyword id="KW-0220">Diaminopimelate biosynthesis</keyword>
<keyword id="KW-0378">Hydrolase</keyword>
<keyword id="KW-0457">Lysine biosynthesis</keyword>
<keyword id="KW-0479">Metal-binding</keyword>
<keyword id="KW-0862">Zinc</keyword>
<protein>
    <recommendedName>
        <fullName evidence="1">Succinyl-diaminopimelate desuccinylase</fullName>
        <shortName evidence="1">SDAP desuccinylase</shortName>
        <ecNumber evidence="1">3.5.1.18</ecNumber>
    </recommendedName>
    <alternativeName>
        <fullName evidence="1">N-succinyl-LL-2,6-diaminoheptanedioate amidohydrolase</fullName>
    </alternativeName>
</protein>